<sequence length="29" mass="3170">MDIVSLAWAALMVVFTFSLSLVVWGRSGL</sequence>
<proteinExistence type="inferred from homology"/>
<keyword id="KW-0150">Chloroplast</keyword>
<keyword id="KW-0249">Electron transport</keyword>
<keyword id="KW-0472">Membrane</keyword>
<keyword id="KW-0602">Photosynthesis</keyword>
<keyword id="KW-0934">Plastid</keyword>
<keyword id="KW-0793">Thylakoid</keyword>
<keyword id="KW-0812">Transmembrane</keyword>
<keyword id="KW-1133">Transmembrane helix</keyword>
<keyword id="KW-0813">Transport</keyword>
<reference key="1">
    <citation type="journal article" date="2007" name="Mol. Biol. Evol.">
        <title>Gene relocations within chloroplast genomes of Jasminum and Menodora (Oleaceae) are due to multiple, overlapping inversions.</title>
        <authorList>
            <person name="Lee H.-L."/>
            <person name="Jansen R.K."/>
            <person name="Chumley T.W."/>
            <person name="Kim K.-J."/>
        </authorList>
    </citation>
    <scope>NUCLEOTIDE SEQUENCE [LARGE SCALE GENOMIC DNA]</scope>
</reference>
<accession>Q06RD8</accession>
<protein>
    <recommendedName>
        <fullName evidence="1">Cytochrome b6-f complex subunit 8</fullName>
    </recommendedName>
    <alternativeName>
        <fullName evidence="1">Cytochrome b6-f complex subunit PetN</fullName>
    </alternativeName>
    <alternativeName>
        <fullName evidence="1">Cytochrome b6-f complex subunit VIII</fullName>
    </alternativeName>
</protein>
<organism>
    <name type="scientific">Jasminum nudiflorum</name>
    <name type="common">Winter jasmine</name>
    <dbReference type="NCBI Taxonomy" id="126431"/>
    <lineage>
        <taxon>Eukaryota</taxon>
        <taxon>Viridiplantae</taxon>
        <taxon>Streptophyta</taxon>
        <taxon>Embryophyta</taxon>
        <taxon>Tracheophyta</taxon>
        <taxon>Spermatophyta</taxon>
        <taxon>Magnoliopsida</taxon>
        <taxon>eudicotyledons</taxon>
        <taxon>Gunneridae</taxon>
        <taxon>Pentapetalae</taxon>
        <taxon>asterids</taxon>
        <taxon>lamiids</taxon>
        <taxon>Lamiales</taxon>
        <taxon>Oleaceae</taxon>
        <taxon>Jasmineae</taxon>
        <taxon>Jasminum</taxon>
    </lineage>
</organism>
<gene>
    <name evidence="1" type="primary">petN</name>
    <name type="ORF">JNC0306</name>
</gene>
<name>PETN_JASNU</name>
<feature type="chain" id="PRO_0000275555" description="Cytochrome b6-f complex subunit 8">
    <location>
        <begin position="1"/>
        <end position="29"/>
    </location>
</feature>
<feature type="transmembrane region" description="Helical" evidence="1">
    <location>
        <begin position="3"/>
        <end position="23"/>
    </location>
</feature>
<evidence type="ECO:0000255" key="1">
    <source>
        <dbReference type="HAMAP-Rule" id="MF_00395"/>
    </source>
</evidence>
<dbReference type="EMBL" id="DQ673255">
    <property type="protein sequence ID" value="ABG74621.1"/>
    <property type="molecule type" value="Genomic_DNA"/>
</dbReference>
<dbReference type="RefSeq" id="YP_778483.1">
    <property type="nucleotide sequence ID" value="NC_008407.1"/>
</dbReference>
<dbReference type="SMR" id="Q06RD8"/>
<dbReference type="GeneID" id="4319746"/>
<dbReference type="GO" id="GO:0009535">
    <property type="term" value="C:chloroplast thylakoid membrane"/>
    <property type="evidence" value="ECO:0007669"/>
    <property type="project" value="UniProtKB-SubCell"/>
</dbReference>
<dbReference type="GO" id="GO:0009512">
    <property type="term" value="C:cytochrome b6f complex"/>
    <property type="evidence" value="ECO:0007669"/>
    <property type="project" value="InterPro"/>
</dbReference>
<dbReference type="GO" id="GO:0045158">
    <property type="term" value="F:electron transporter, transferring electrons within cytochrome b6/f complex of photosystem II activity"/>
    <property type="evidence" value="ECO:0007669"/>
    <property type="project" value="InterPro"/>
</dbReference>
<dbReference type="GO" id="GO:0017004">
    <property type="term" value="P:cytochrome complex assembly"/>
    <property type="evidence" value="ECO:0007669"/>
    <property type="project" value="UniProtKB-UniRule"/>
</dbReference>
<dbReference type="GO" id="GO:0015979">
    <property type="term" value="P:photosynthesis"/>
    <property type="evidence" value="ECO:0007669"/>
    <property type="project" value="UniProtKB-KW"/>
</dbReference>
<dbReference type="HAMAP" id="MF_00395">
    <property type="entry name" value="Cytb6_f_PetN"/>
    <property type="match status" value="1"/>
</dbReference>
<dbReference type="InterPro" id="IPR036143">
    <property type="entry name" value="Cytochr_b6-f_cplx_su8_sf"/>
</dbReference>
<dbReference type="InterPro" id="IPR005497">
    <property type="entry name" value="Cytochrome_b6-f_cplx_su8"/>
</dbReference>
<dbReference type="Pfam" id="PF03742">
    <property type="entry name" value="PetN"/>
    <property type="match status" value="1"/>
</dbReference>
<dbReference type="SUPFAM" id="SSF103451">
    <property type="entry name" value="PetN subunit of the cytochrome b6f complex"/>
    <property type="match status" value="1"/>
</dbReference>
<comment type="function">
    <text evidence="1">Component of the cytochrome b6-f complex, which mediates electron transfer between photosystem II (PSII) and photosystem I (PSI), cyclic electron flow around PSI, and state transitions.</text>
</comment>
<comment type="subunit">
    <text evidence="1">The 4 large subunits of the cytochrome b6-f complex are cytochrome b6, subunit IV (17 kDa polypeptide, PetD), cytochrome f and the Rieske protein, while the 4 small subunits are PetG, PetL, PetM and PetN. The complex functions as a dimer.</text>
</comment>
<comment type="subcellular location">
    <subcellularLocation>
        <location>Plastid</location>
        <location>Chloroplast thylakoid membrane</location>
        <topology>Single-pass membrane protein</topology>
    </subcellularLocation>
</comment>
<comment type="similarity">
    <text evidence="1">Belongs to the PetN family.</text>
</comment>
<geneLocation type="chloroplast"/>